<gene>
    <name type="primary">Cdk9</name>
</gene>
<feature type="chain" id="PRO_0000085802" description="Cyclin-dependent kinase 9">
    <location>
        <begin position="1"/>
        <end position="372"/>
    </location>
</feature>
<feature type="domain" description="Protein kinase" evidence="4">
    <location>
        <begin position="19"/>
        <end position="315"/>
    </location>
</feature>
<feature type="region of interest" description="T-loop" evidence="1">
    <location>
        <begin position="166"/>
        <end position="191"/>
    </location>
</feature>
<feature type="region of interest" description="Disordered" evidence="6">
    <location>
        <begin position="343"/>
        <end position="372"/>
    </location>
</feature>
<feature type="compositionally biased region" description="Polar residues" evidence="6">
    <location>
        <begin position="347"/>
        <end position="366"/>
    </location>
</feature>
<feature type="active site" description="Proton acceptor" evidence="4 5">
    <location>
        <position position="149"/>
    </location>
</feature>
<feature type="binding site" evidence="4">
    <location>
        <begin position="25"/>
        <end position="33"/>
    </location>
    <ligand>
        <name>ATP</name>
        <dbReference type="ChEBI" id="CHEBI:30616"/>
    </ligand>
</feature>
<feature type="binding site" evidence="4">
    <location>
        <position position="48"/>
    </location>
    <ligand>
        <name>ATP</name>
        <dbReference type="ChEBI" id="CHEBI:30616"/>
    </ligand>
</feature>
<feature type="binding site" evidence="4">
    <location>
        <begin position="104"/>
        <end position="106"/>
    </location>
    <ligand>
        <name>ATP</name>
        <dbReference type="ChEBI" id="CHEBI:30616"/>
    </ligand>
</feature>
<feature type="binding site" evidence="4">
    <location>
        <position position="167"/>
    </location>
    <ligand>
        <name>ATP</name>
        <dbReference type="ChEBI" id="CHEBI:30616"/>
    </ligand>
</feature>
<feature type="modified residue" description="N6-acetyllysine; by EP300/CBP, PCAF/KAT2B and GCN5/KAT2A" evidence="2">
    <location>
        <position position="44"/>
    </location>
</feature>
<feature type="modified residue" description="N6-acetyllysine; by PCAF/KAT2B and GCN5/KAT2A" evidence="2">
    <location>
        <position position="48"/>
    </location>
</feature>
<feature type="modified residue" description="Phosphoserine" evidence="2">
    <location>
        <position position="175"/>
    </location>
</feature>
<feature type="modified residue" description="Phosphothreonine; by CaMK1D" evidence="2">
    <location>
        <position position="186"/>
    </location>
</feature>
<feature type="modified residue" description="Phosphoserine; by CDK9 and PKA" evidence="2">
    <location>
        <position position="347"/>
    </location>
</feature>
<feature type="modified residue" description="Phosphothreonine; by CDK9" evidence="2">
    <location>
        <position position="350"/>
    </location>
</feature>
<feature type="modified residue" description="Phosphoserine; by CDK9" evidence="2">
    <location>
        <position position="353"/>
    </location>
</feature>
<feature type="modified residue" description="Phosphothreonine; by CDK9" evidence="2">
    <location>
        <position position="354"/>
    </location>
</feature>
<feature type="modified residue" description="Phosphoserine; by CDK9" evidence="2">
    <location>
        <position position="357"/>
    </location>
</feature>
<feature type="modified residue" description="Phosphothreonine; by CDK9" evidence="2">
    <location>
        <position position="362"/>
    </location>
</feature>
<feature type="modified residue" description="Phosphothreonine; by CDK9" evidence="2">
    <location>
        <position position="363"/>
    </location>
</feature>
<reference key="1">
    <citation type="journal article" date="2004" name="Genome Res.">
        <title>The status, quality, and expansion of the NIH full-length cDNA project: the Mammalian Gene Collection (MGC).</title>
        <authorList>
            <consortium name="The MGC Project Team"/>
        </authorList>
    </citation>
    <scope>NUCLEOTIDE SEQUENCE [LARGE SCALE MRNA]</scope>
    <source>
        <tissue>Testis</tissue>
    </source>
</reference>
<evidence type="ECO:0000250" key="1"/>
<evidence type="ECO:0000250" key="2">
    <source>
        <dbReference type="UniProtKB" id="P50750"/>
    </source>
</evidence>
<evidence type="ECO:0000250" key="3">
    <source>
        <dbReference type="UniProtKB" id="Q99J95"/>
    </source>
</evidence>
<evidence type="ECO:0000255" key="4">
    <source>
        <dbReference type="PROSITE-ProRule" id="PRU00159"/>
    </source>
</evidence>
<evidence type="ECO:0000255" key="5">
    <source>
        <dbReference type="PROSITE-ProRule" id="PRU10027"/>
    </source>
</evidence>
<evidence type="ECO:0000256" key="6">
    <source>
        <dbReference type="SAM" id="MobiDB-lite"/>
    </source>
</evidence>
<evidence type="ECO:0000305" key="7"/>
<sequence length="372" mass="42762">MAKQYDSVECPFCDEVTKYEKLAKIGQGTFGEVFKAKHRQTGQKVALKKVLMENEKEGFPITALREIKILQLLKHENVVNLIEICRTKASPYNRCKGSIYLVFDFCEHDLAGLLSNVLVKFTLSEIKRVMQMLLNGLYYIHRNKILHRDMKAANVLITRDGVLKLADFGLARAFSLAKNSQPNRYTNRVVTLWYRPPELLLGERDYGPPIDLWGAGCIMAEMWTRSPIMQGNTEQHQLALISQLCGSITPEVWPNVDKYELFEKLELVKGQKRKVKDRLKAYVRDPYALDLIDKLLVLDPAQRIDSDDALNHDFFWSDPMPSDLKGMLSTHLTSMFEYLAPPRRKGSQITQQSTNQSRNPATTNQTEFERVF</sequence>
<dbReference type="EC" id="2.7.11.22"/>
<dbReference type="EC" id="2.7.11.23"/>
<dbReference type="EMBL" id="BC082037">
    <property type="protein sequence ID" value="AAH82037.1"/>
    <property type="molecule type" value="mRNA"/>
</dbReference>
<dbReference type="RefSeq" id="NP_001007744.1">
    <property type="nucleotide sequence ID" value="NM_001007743.1"/>
</dbReference>
<dbReference type="SMR" id="Q641Z4"/>
<dbReference type="BioGRID" id="263196">
    <property type="interactions" value="1"/>
</dbReference>
<dbReference type="FunCoup" id="Q641Z4">
    <property type="interactions" value="4114"/>
</dbReference>
<dbReference type="IntAct" id="Q641Z4">
    <property type="interactions" value="1"/>
</dbReference>
<dbReference type="MINT" id="Q641Z4"/>
<dbReference type="STRING" id="10116.ENSRNOP00000037778"/>
<dbReference type="iPTMnet" id="Q641Z4"/>
<dbReference type="PhosphoSitePlus" id="Q641Z4"/>
<dbReference type="PaxDb" id="10116-ENSRNOP00000037778"/>
<dbReference type="GeneID" id="362110"/>
<dbReference type="KEGG" id="rno:362110"/>
<dbReference type="UCSC" id="RGD:1359638">
    <property type="organism name" value="rat"/>
</dbReference>
<dbReference type="AGR" id="RGD:1359638"/>
<dbReference type="CTD" id="1025"/>
<dbReference type="RGD" id="1359638">
    <property type="gene designation" value="Cdk9"/>
</dbReference>
<dbReference type="VEuPathDB" id="HostDB:ENSRNOG00000022586"/>
<dbReference type="eggNOG" id="KOG0669">
    <property type="taxonomic scope" value="Eukaryota"/>
</dbReference>
<dbReference type="HOGENOM" id="CLU_000288_181_1_1"/>
<dbReference type="InParanoid" id="Q641Z4"/>
<dbReference type="OrthoDB" id="6836at9989"/>
<dbReference type="PhylomeDB" id="Q641Z4"/>
<dbReference type="TreeFam" id="TF101039"/>
<dbReference type="Reactome" id="R-RNO-112382">
    <property type="pathway name" value="Formation of RNA Pol II elongation complex"/>
</dbReference>
<dbReference type="Reactome" id="R-RNO-2173796">
    <property type="pathway name" value="SMAD2/SMAD3:SMAD4 heterotrimer regulates transcription"/>
</dbReference>
<dbReference type="Reactome" id="R-RNO-674695">
    <property type="pathway name" value="RNA Polymerase II Pre-transcription Events"/>
</dbReference>
<dbReference type="Reactome" id="R-RNO-6796648">
    <property type="pathway name" value="TP53 Regulates Transcription of DNA Repair Genes"/>
</dbReference>
<dbReference type="Reactome" id="R-RNO-6807505">
    <property type="pathway name" value="RNA polymerase II transcribes snRNA genes"/>
</dbReference>
<dbReference type="Reactome" id="R-RNO-75955">
    <property type="pathway name" value="RNA Polymerase II Transcription Elongation"/>
</dbReference>
<dbReference type="Reactome" id="R-RNO-9018519">
    <property type="pathway name" value="Estrogen-dependent gene expression"/>
</dbReference>
<dbReference type="PRO" id="PR:Q641Z4"/>
<dbReference type="Proteomes" id="UP000002494">
    <property type="component" value="Chromosome 3"/>
</dbReference>
<dbReference type="Bgee" id="ENSRNOG00000022586">
    <property type="expression patterns" value="Expressed in thymus and 20 other cell types or tissues"/>
</dbReference>
<dbReference type="GO" id="GO:0008024">
    <property type="term" value="C:cyclin/CDK positive transcription elongation factor complex"/>
    <property type="evidence" value="ECO:0000250"/>
    <property type="project" value="UniProtKB"/>
</dbReference>
<dbReference type="GO" id="GO:0005737">
    <property type="term" value="C:cytoplasm"/>
    <property type="evidence" value="ECO:0007669"/>
    <property type="project" value="UniProtKB-SubCell"/>
</dbReference>
<dbReference type="GO" id="GO:0005634">
    <property type="term" value="C:nucleus"/>
    <property type="evidence" value="ECO:0000266"/>
    <property type="project" value="RGD"/>
</dbReference>
<dbReference type="GO" id="GO:0070691">
    <property type="term" value="C:P-TEFb complex"/>
    <property type="evidence" value="ECO:0000250"/>
    <property type="project" value="UniProtKB"/>
</dbReference>
<dbReference type="GO" id="GO:0016605">
    <property type="term" value="C:PML body"/>
    <property type="evidence" value="ECO:0000266"/>
    <property type="project" value="RGD"/>
</dbReference>
<dbReference type="GO" id="GO:0008023">
    <property type="term" value="C:transcription elongation factor complex"/>
    <property type="evidence" value="ECO:0000250"/>
    <property type="project" value="UniProtKB"/>
</dbReference>
<dbReference type="GO" id="GO:0097322">
    <property type="term" value="F:7SK snRNA binding"/>
    <property type="evidence" value="ECO:0000250"/>
    <property type="project" value="UniProtKB"/>
</dbReference>
<dbReference type="GO" id="GO:0005524">
    <property type="term" value="F:ATP binding"/>
    <property type="evidence" value="ECO:0007669"/>
    <property type="project" value="UniProtKB-KW"/>
</dbReference>
<dbReference type="GO" id="GO:0003682">
    <property type="term" value="F:chromatin binding"/>
    <property type="evidence" value="ECO:0000314"/>
    <property type="project" value="RGD"/>
</dbReference>
<dbReference type="GO" id="GO:0004693">
    <property type="term" value="F:cyclin-dependent protein serine/threonine kinase activity"/>
    <property type="evidence" value="ECO:0000266"/>
    <property type="project" value="RGD"/>
</dbReference>
<dbReference type="GO" id="GO:0003677">
    <property type="term" value="F:DNA binding"/>
    <property type="evidence" value="ECO:0000266"/>
    <property type="project" value="RGD"/>
</dbReference>
<dbReference type="GO" id="GO:0016301">
    <property type="term" value="F:kinase activity"/>
    <property type="evidence" value="ECO:0000266"/>
    <property type="project" value="RGD"/>
</dbReference>
<dbReference type="GO" id="GO:0019901">
    <property type="term" value="F:protein kinase binding"/>
    <property type="evidence" value="ECO:0000266"/>
    <property type="project" value="RGD"/>
</dbReference>
<dbReference type="GO" id="GO:0106310">
    <property type="term" value="F:protein serine kinase activity"/>
    <property type="evidence" value="ECO:0007669"/>
    <property type="project" value="RHEA"/>
</dbReference>
<dbReference type="GO" id="GO:0004674">
    <property type="term" value="F:protein serine/threonine kinase activity"/>
    <property type="evidence" value="ECO:0000250"/>
    <property type="project" value="UniProtKB"/>
</dbReference>
<dbReference type="GO" id="GO:0000978">
    <property type="term" value="F:RNA polymerase II cis-regulatory region sequence-specific DNA binding"/>
    <property type="evidence" value="ECO:0000266"/>
    <property type="project" value="RGD"/>
</dbReference>
<dbReference type="GO" id="GO:0008353">
    <property type="term" value="F:RNA polymerase II CTD heptapeptide repeat kinase activity"/>
    <property type="evidence" value="ECO:0000250"/>
    <property type="project" value="UniProtKB"/>
</dbReference>
<dbReference type="GO" id="GO:0017069">
    <property type="term" value="F:snRNA binding"/>
    <property type="evidence" value="ECO:0000266"/>
    <property type="project" value="RGD"/>
</dbReference>
<dbReference type="GO" id="GO:0000976">
    <property type="term" value="F:transcription cis-regulatory region binding"/>
    <property type="evidence" value="ECO:0000266"/>
    <property type="project" value="RGD"/>
</dbReference>
<dbReference type="GO" id="GO:0001223">
    <property type="term" value="F:transcription coactivator binding"/>
    <property type="evidence" value="ECO:0000266"/>
    <property type="project" value="RGD"/>
</dbReference>
<dbReference type="GO" id="GO:0003711">
    <property type="term" value="F:transcription elongation factor activity"/>
    <property type="evidence" value="ECO:0000266"/>
    <property type="project" value="RGD"/>
</dbReference>
<dbReference type="GO" id="GO:0071345">
    <property type="term" value="P:cellular response to cytokine stimulus"/>
    <property type="evidence" value="ECO:0000266"/>
    <property type="project" value="RGD"/>
</dbReference>
<dbReference type="GO" id="GO:0006281">
    <property type="term" value="P:DNA repair"/>
    <property type="evidence" value="ECO:0007669"/>
    <property type="project" value="UniProtKB-KW"/>
</dbReference>
<dbReference type="GO" id="GO:0120186">
    <property type="term" value="P:negative regulation of protein localization to chromatin"/>
    <property type="evidence" value="ECO:0000266"/>
    <property type="project" value="RGD"/>
</dbReference>
<dbReference type="GO" id="GO:0051647">
    <property type="term" value="P:nucleus localization"/>
    <property type="evidence" value="ECO:0000266"/>
    <property type="project" value="RGD"/>
</dbReference>
<dbReference type="GO" id="GO:0043923">
    <property type="term" value="P:positive regulation by host of viral transcription"/>
    <property type="evidence" value="ECO:0000266"/>
    <property type="project" value="RGD"/>
</dbReference>
<dbReference type="GO" id="GO:0010613">
    <property type="term" value="P:positive regulation of cardiac muscle hypertrophy"/>
    <property type="evidence" value="ECO:0000315"/>
    <property type="project" value="RGD"/>
</dbReference>
<dbReference type="GO" id="GO:0120187">
    <property type="term" value="P:positive regulation of protein localization to chromatin"/>
    <property type="evidence" value="ECO:0000250"/>
    <property type="project" value="UniProtKB"/>
</dbReference>
<dbReference type="GO" id="GO:0045944">
    <property type="term" value="P:positive regulation of transcription by RNA polymerase II"/>
    <property type="evidence" value="ECO:0000250"/>
    <property type="project" value="UniProtKB"/>
</dbReference>
<dbReference type="GO" id="GO:0032968">
    <property type="term" value="P:positive regulation of transcription elongation by RNA polymerase II"/>
    <property type="evidence" value="ECO:0000250"/>
    <property type="project" value="UniProtKB"/>
</dbReference>
<dbReference type="GO" id="GO:0051726">
    <property type="term" value="P:regulation of cell cycle"/>
    <property type="evidence" value="ECO:0000266"/>
    <property type="project" value="RGD"/>
</dbReference>
<dbReference type="GO" id="GO:0006282">
    <property type="term" value="P:regulation of DNA repair"/>
    <property type="evidence" value="ECO:0000266"/>
    <property type="project" value="RGD"/>
</dbReference>
<dbReference type="GO" id="GO:0031440">
    <property type="term" value="P:regulation of mRNA 3'-end processing"/>
    <property type="evidence" value="ECO:0000266"/>
    <property type="project" value="RGD"/>
</dbReference>
<dbReference type="GO" id="GO:0051147">
    <property type="term" value="P:regulation of muscle cell differentiation"/>
    <property type="evidence" value="ECO:0000266"/>
    <property type="project" value="RGD"/>
</dbReference>
<dbReference type="GO" id="GO:0031297">
    <property type="term" value="P:replication fork processing"/>
    <property type="evidence" value="ECO:0000266"/>
    <property type="project" value="RGD"/>
</dbReference>
<dbReference type="GO" id="GO:0009410">
    <property type="term" value="P:response to xenobiotic stimulus"/>
    <property type="evidence" value="ECO:0000270"/>
    <property type="project" value="RGD"/>
</dbReference>
<dbReference type="GO" id="GO:0006366">
    <property type="term" value="P:transcription by RNA polymerase II"/>
    <property type="evidence" value="ECO:0000250"/>
    <property type="project" value="UniProtKB"/>
</dbReference>
<dbReference type="GO" id="GO:0006368">
    <property type="term" value="P:transcription elongation by RNA polymerase II"/>
    <property type="evidence" value="ECO:0000266"/>
    <property type="project" value="RGD"/>
</dbReference>
<dbReference type="GO" id="GO:0140673">
    <property type="term" value="P:transcription elongation-coupled chromatin remodeling"/>
    <property type="evidence" value="ECO:0000266"/>
    <property type="project" value="RGD"/>
</dbReference>
<dbReference type="CDD" id="cd07865">
    <property type="entry name" value="STKc_CDK9"/>
    <property type="match status" value="1"/>
</dbReference>
<dbReference type="FunFam" id="1.10.510.10:FF:000203">
    <property type="entry name" value="Cyclin-dependent kinase 9"/>
    <property type="match status" value="1"/>
</dbReference>
<dbReference type="FunFam" id="3.30.200.20:FF:000227">
    <property type="entry name" value="Cyclin-dependent kinase 9"/>
    <property type="match status" value="1"/>
</dbReference>
<dbReference type="Gene3D" id="3.30.200.20">
    <property type="entry name" value="Phosphorylase Kinase, domain 1"/>
    <property type="match status" value="1"/>
</dbReference>
<dbReference type="Gene3D" id="1.10.510.10">
    <property type="entry name" value="Transferase(Phosphotransferase) domain 1"/>
    <property type="match status" value="1"/>
</dbReference>
<dbReference type="InterPro" id="IPR050108">
    <property type="entry name" value="CDK"/>
</dbReference>
<dbReference type="InterPro" id="IPR011009">
    <property type="entry name" value="Kinase-like_dom_sf"/>
</dbReference>
<dbReference type="InterPro" id="IPR000719">
    <property type="entry name" value="Prot_kinase_dom"/>
</dbReference>
<dbReference type="InterPro" id="IPR017441">
    <property type="entry name" value="Protein_kinase_ATP_BS"/>
</dbReference>
<dbReference type="InterPro" id="IPR008271">
    <property type="entry name" value="Ser/Thr_kinase_AS"/>
</dbReference>
<dbReference type="PANTHER" id="PTHR24056">
    <property type="entry name" value="CELL DIVISION PROTEIN KINASE"/>
    <property type="match status" value="1"/>
</dbReference>
<dbReference type="PANTHER" id="PTHR24056:SF233">
    <property type="entry name" value="CYCLIN-DEPENDENT KINASE 9"/>
    <property type="match status" value="1"/>
</dbReference>
<dbReference type="Pfam" id="PF00069">
    <property type="entry name" value="Pkinase"/>
    <property type="match status" value="1"/>
</dbReference>
<dbReference type="SMART" id="SM00220">
    <property type="entry name" value="S_TKc"/>
    <property type="match status" value="1"/>
</dbReference>
<dbReference type="SUPFAM" id="SSF56112">
    <property type="entry name" value="Protein kinase-like (PK-like)"/>
    <property type="match status" value="1"/>
</dbReference>
<dbReference type="PROSITE" id="PS00107">
    <property type="entry name" value="PROTEIN_KINASE_ATP"/>
    <property type="match status" value="1"/>
</dbReference>
<dbReference type="PROSITE" id="PS50011">
    <property type="entry name" value="PROTEIN_KINASE_DOM"/>
    <property type="match status" value="1"/>
</dbReference>
<dbReference type="PROSITE" id="PS00108">
    <property type="entry name" value="PROTEIN_KINASE_ST"/>
    <property type="match status" value="1"/>
</dbReference>
<keyword id="KW-0007">Acetylation</keyword>
<keyword id="KW-0067">ATP-binding</keyword>
<keyword id="KW-0963">Cytoplasm</keyword>
<keyword id="KW-0227">DNA damage</keyword>
<keyword id="KW-0234">DNA repair</keyword>
<keyword id="KW-0418">Kinase</keyword>
<keyword id="KW-0547">Nucleotide-binding</keyword>
<keyword id="KW-0539">Nucleus</keyword>
<keyword id="KW-0597">Phosphoprotein</keyword>
<keyword id="KW-1185">Reference proteome</keyword>
<keyword id="KW-0723">Serine/threonine-protein kinase</keyword>
<keyword id="KW-0804">Transcription</keyword>
<keyword id="KW-0805">Transcription regulation</keyword>
<keyword id="KW-0808">Transferase</keyword>
<keyword id="KW-0832">Ubl conjugation</keyword>
<organism>
    <name type="scientific">Rattus norvegicus</name>
    <name type="common">Rat</name>
    <dbReference type="NCBI Taxonomy" id="10116"/>
    <lineage>
        <taxon>Eukaryota</taxon>
        <taxon>Metazoa</taxon>
        <taxon>Chordata</taxon>
        <taxon>Craniata</taxon>
        <taxon>Vertebrata</taxon>
        <taxon>Euteleostomi</taxon>
        <taxon>Mammalia</taxon>
        <taxon>Eutheria</taxon>
        <taxon>Euarchontoglires</taxon>
        <taxon>Glires</taxon>
        <taxon>Rodentia</taxon>
        <taxon>Myomorpha</taxon>
        <taxon>Muroidea</taxon>
        <taxon>Muridae</taxon>
        <taxon>Murinae</taxon>
        <taxon>Rattus</taxon>
    </lineage>
</organism>
<accession>Q641Z4</accession>
<comment type="function">
    <text evidence="2">Protein kinase involved in the regulation of transcription. Member of the cyclin-dependent kinase pair (CDK9/cyclin-T) complex, also called positive transcription elongation factor b (P-TEFb), which facilitates the transition from abortive to productive elongation by phosphorylating the CTD (C-terminal domain) of the large subunit of RNA polymerase II (RNAP II) POLR2A, SUPT5H and RDBP. This complex is inactive when in the 7SK snRNP complex form. Phosphorylates EP300, MYOD1, RPB1/POLR2A and AR and the negative elongation factors DSIF and NELFE. Regulates cytokine inducible transcription networks by facilitating promoter recognition of target transcription factors (e.g. TNF-inducible RELA/p65 activation and IL-6-inducible STAT3 signaling). Promotes RNA synthesis in genetic programs for cell growth, differentiation and viral pathogenesis. P-TEFb is also involved in cotranscriptional histone modification, mRNA processing and mRNA export. Modulates a complex network of chromatin modifications including histone H2B monoubiquitination (H2Bub1), H3 lysine 4 trimethylation (H3K4me3) and H3K36me3; integrates phosphorylation during transcription with chromatin modifications to control co-transcriptional histone mRNA processing. The CDK9/cyclin-K complex has also a kinase activity towards CTD of RNAP II and can substitute for CDK9/cyclin-T P-TEFb in vitro. Replication stress response protein; the CDK9/cyclin-K complex is required for genome integrity maintenance, by promoting cell cycle recovery from replication arrest and limiting single-stranded DNA amount in response to replication stress, thus reducing the breakdown of stalled replication forks and avoiding DNA damage. In addition, probable function in DNA repair of isoform 2 via interaction with KU70/XRCC6. Promotes cardiac myocyte enlargement. RPB1/POLR2A phosphorylation on 'Ser-2' in CTD activates transcription. AR phosphorylation modulates AR transcription factor promoter selectivity and cell growth. DSIF and NELF phosphorylation promotes transcription by inhibiting their negative effect. The phosphorylation of MYOD1 enhances its transcriptional activity and thus promotes muscle differentiation. Catalyzes phosphorylation of KAT5, promoting KAT5 recruitment to chromatin and histone acetyltransferase activity.</text>
</comment>
<comment type="catalytic activity">
    <reaction evidence="2">
        <text>L-seryl-[protein] + ATP = O-phospho-L-seryl-[protein] + ADP + H(+)</text>
        <dbReference type="Rhea" id="RHEA:17989"/>
        <dbReference type="Rhea" id="RHEA-COMP:9863"/>
        <dbReference type="Rhea" id="RHEA-COMP:11604"/>
        <dbReference type="ChEBI" id="CHEBI:15378"/>
        <dbReference type="ChEBI" id="CHEBI:29999"/>
        <dbReference type="ChEBI" id="CHEBI:30616"/>
        <dbReference type="ChEBI" id="CHEBI:83421"/>
        <dbReference type="ChEBI" id="CHEBI:456216"/>
        <dbReference type="EC" id="2.7.11.22"/>
    </reaction>
    <physiologicalReaction direction="left-to-right" evidence="2">
        <dbReference type="Rhea" id="RHEA:17990"/>
    </physiologicalReaction>
</comment>
<comment type="catalytic activity">
    <reaction evidence="2">
        <text>L-threonyl-[protein] + ATP = O-phospho-L-threonyl-[protein] + ADP + H(+)</text>
        <dbReference type="Rhea" id="RHEA:46608"/>
        <dbReference type="Rhea" id="RHEA-COMP:11060"/>
        <dbReference type="Rhea" id="RHEA-COMP:11605"/>
        <dbReference type="ChEBI" id="CHEBI:15378"/>
        <dbReference type="ChEBI" id="CHEBI:30013"/>
        <dbReference type="ChEBI" id="CHEBI:30616"/>
        <dbReference type="ChEBI" id="CHEBI:61977"/>
        <dbReference type="ChEBI" id="CHEBI:456216"/>
        <dbReference type="EC" id="2.7.11.22"/>
    </reaction>
    <physiologicalReaction direction="left-to-right" evidence="2">
        <dbReference type="Rhea" id="RHEA:46609"/>
    </physiologicalReaction>
</comment>
<comment type="catalytic activity">
    <reaction evidence="2">
        <text>[DNA-directed RNA polymerase] + ATP = phospho-[DNA-directed RNA polymerase] + ADP + H(+)</text>
        <dbReference type="Rhea" id="RHEA:10216"/>
        <dbReference type="Rhea" id="RHEA-COMP:11321"/>
        <dbReference type="Rhea" id="RHEA-COMP:11322"/>
        <dbReference type="ChEBI" id="CHEBI:15378"/>
        <dbReference type="ChEBI" id="CHEBI:30616"/>
        <dbReference type="ChEBI" id="CHEBI:43176"/>
        <dbReference type="ChEBI" id="CHEBI:68546"/>
        <dbReference type="ChEBI" id="CHEBI:456216"/>
        <dbReference type="EC" id="2.7.11.23"/>
    </reaction>
    <physiologicalReaction direction="left-to-right" evidence="2">
        <dbReference type="Rhea" id="RHEA:10217"/>
    </physiologicalReaction>
</comment>
<comment type="activity regulation">
    <text evidence="2">Activation by Thr-186 phosphorylation is calcium Ca(2+) signaling pathway-dependent; actively inactivated by dephosphorylation mediated by PPP1CA, PPM1A and PPM1B. Reversibly repressed by acetylation at Lys-44 and Lys-48 (By similarity).</text>
</comment>
<comment type="subunit">
    <text evidence="2 3">Component of the super elongation complex (SEC), at least composed of EAF1, EAF2, CDK9, MLLT3/AF9, AFF (AFF1 or AFF4), the P-TEFb complex and ELL (ELL, ELL2 or ELL3). Associates with CCNT1/cyclin-T1, CCNT2/cyclin-T2 (isoform A and isoform B) or CCNK/cyclin-K to form active P-TEFb. P-TEFb forms a complex with AFF4/AF5Q31 and is part of the super elongation complex (SEC). Component of a complex which is composed of at least 5 members: HTATSF1/Tat-SF1, P-TEFb complex, RNA pol II, SUPT5H, and NCL/nucleolin. Associates with UBR5 and forms a transcription regulatory complex composed of CDK9, RNAP II, UBR5 and TFIIS/TCEA1 that can stimulate target gene transcription (e.g. gamma fibrinogen/FGG) by recruiting their promoters. Component of the 7SK snRNP inactive complex which is composed of at least 8 members: P-TEFb (composed of CDK9 and CCNT1/cyclin-T1), HEXIM1, HEXIM2, LARP7, BCDIN3, SART3 proteins and 7SK and U6 snRNAs. This inactive 7SK snRNP complex can also interact with NCOR1 and HDAC3, probably to regulate CDK9 acetylation. Release of P-TEFb from P-TEFb/7SK snRNP complex requires both PP2B to transduce calcium Ca(2+) signaling in response to stimuli (e.g. UV or hexamethylene bisacetamide (HMBA)), and PPP1CA to dephosphorylate Thr-186. This released P-TEFb remains inactive in the pre-initiation complex with BRD4 until new Thr-186 phosphorylation occurs after the synthesis of a short RNA. Interacts with BRD4; to target chromatin binding. Interacts with JMJD6. Interacts with activated nuclear STAT3 and RELA/p65. Binds to AR and MYOD1. Forms a complex composed of CDK9, CCNT1/cyclin-T1, EP300 and GATA4 that stimulates hypertrophy in cardiomyocytes (By similarity). The large PER complex involved in the repression of transcriptional termination is composed of at least PER2, CDK9, DDX5, DHX9, NCBP1 and POLR2A (By similarity). Interacts with HSF1 (By similarity). Interacts with TBX21 (By similarity). Interacts with WDR43 (By similarity). Interacts with ZMYND8; the association appears to occur between homodimeric ZMYND8 and the activated form of the P-TEFb complex (By similarity).</text>
</comment>
<comment type="subcellular location">
    <subcellularLocation>
        <location evidence="1">Nucleus</location>
    </subcellularLocation>
    <subcellularLocation>
        <location evidence="1">Cytoplasm</location>
    </subcellularLocation>
    <subcellularLocation>
        <location evidence="1">Nucleus</location>
        <location evidence="1">PML body</location>
    </subcellularLocation>
    <text evidence="1">Accumulates on chromatin in response to replication stress. Complexed with CCNT1 in nuclear speckles, but uncomplexed form in the cytoplasm. The translocation from nucleus to cytoplasm is XPO1/CRM1-dependent. Associates with PML body when acetylated (By similarity).</text>
</comment>
<comment type="PTM">
    <text evidence="2">Autophosphorylation at Thr-186, Ser-347, Thr-350, Ser-353, Thr-354 and Ser-357 triggers kinase activity by promoting cyclin and substrate binding upon conformational changes. Thr-186 phosphorylation requires the calcium Ca(2+) signaling pathway, including CaMK1D and calmodulin. This inhibition is relieved by Thr-29 dephosphorylation. Phosphorylation at Ser-175 inhibits kinase activity. Can be phosphorylated on either Thr-362 or Thr-363 but not on both simultaneously (By similarity).</text>
</comment>
<comment type="PTM">
    <text evidence="2">Dephosphorylation of Thr-186 by PPM1A and PPM1B blocks CDK9 activity and may lead to CDK9 proteasomal degradation. However, PPP1CA-mediated Thr-186 dephosphorylation is required to release P-TEFb from its inactive P-TEFb/7SK snRNP complex. Dephosphorylated at Ser-347 by the PNUTS-PP1 complex during RNA polymerase II transcription pause-release. Dephosphorylation of C-terminus Thr and Ser residues by protein phosphatase-1 (PP1) triggers CDK9 activity.</text>
</comment>
<comment type="PTM">
    <text evidence="2">N6-acetylation of Lys-44 promotes kinase activity, whereas acetylation of both Lys-44 and Lys-48 mediated by PCAF/KAT2B and GCN5/KAT2A reduces kinase activity. The acetylated form associates with PML bodies in the nuclear matrix and with the transcriptionally silent HIV-1 genome; deacetylated upon transcription stimulation. Deacetylated by SIRT7, promoting the kinase activity and subsequent 'Ser-2' phosphorylation of the C-terminal domain (CTD) of RNA polymerase II.</text>
</comment>
<comment type="PTM">
    <text evidence="2">Polyubiquitinated and thus activated by UBR5. This ubiquitination is promoted by TFIIS/TCEA1 and favors 'Ser-2' phosphorylation of RPB1/POLR2A CTD (By similarity).</text>
</comment>
<comment type="similarity">
    <text evidence="7">Belongs to the protein kinase superfamily. CMGC Ser/Thr protein kinase family. CDC2/CDKX subfamily.</text>
</comment>
<protein>
    <recommendedName>
        <fullName>Cyclin-dependent kinase 9</fullName>
        <ecNumber>2.7.11.22</ecNumber>
        <ecNumber>2.7.11.23</ecNumber>
    </recommendedName>
    <alternativeName>
        <fullName>Cell division protein kinase 9</fullName>
    </alternativeName>
</protein>
<proteinExistence type="evidence at transcript level"/>
<name>CDK9_RAT</name>